<gene>
    <name evidence="7" type="primary">PKS19</name>
    <name type="ORF">FFUJ_12239</name>
</gene>
<keyword id="KW-0012">Acyltransferase</keyword>
<keyword id="KW-0489">Methyltransferase</keyword>
<keyword id="KW-0511">Multifunctional enzyme</keyword>
<keyword id="KW-0521">NADP</keyword>
<keyword id="KW-0560">Oxidoreductase</keyword>
<keyword id="KW-0596">Phosphopantetheine</keyword>
<keyword id="KW-0597">Phosphoprotein</keyword>
<keyword id="KW-1185">Reference proteome</keyword>
<keyword id="KW-0949">S-adenosyl-L-methionine</keyword>
<keyword id="KW-0808">Transferase</keyword>
<evidence type="ECO:0000255" key="1"/>
<evidence type="ECO:0000255" key="2">
    <source>
        <dbReference type="PROSITE-ProRule" id="PRU00258"/>
    </source>
</evidence>
<evidence type="ECO:0000255" key="3">
    <source>
        <dbReference type="PROSITE-ProRule" id="PRU01348"/>
    </source>
</evidence>
<evidence type="ECO:0000255" key="4">
    <source>
        <dbReference type="PROSITE-ProRule" id="PRU01363"/>
    </source>
</evidence>
<evidence type="ECO:0000269" key="5">
    <source>
    </source>
</evidence>
<evidence type="ECO:0000269" key="6">
    <source>
    </source>
</evidence>
<evidence type="ECO:0000303" key="7">
    <source>
    </source>
</evidence>
<evidence type="ECO:0000303" key="8">
    <source>
    </source>
</evidence>
<reference key="1">
    <citation type="journal article" date="2013" name="PLoS Pathog.">
        <title>Deciphering the cryptic genome: genome-wide analyses of the rice pathogen Fusarium fujikuroi reveal complex regulation of secondary metabolism and novel metabolites.</title>
        <authorList>
            <person name="Wiemann P."/>
            <person name="Sieber C.M.K."/>
            <person name="von Bargen K.W."/>
            <person name="Studt L."/>
            <person name="Niehaus E.-M."/>
            <person name="Espino J.J."/>
            <person name="Huss K."/>
            <person name="Michielse C.B."/>
            <person name="Albermann S."/>
            <person name="Wagner D."/>
            <person name="Bergner S.V."/>
            <person name="Connolly L.R."/>
            <person name="Fischer A."/>
            <person name="Reuter G."/>
            <person name="Kleigrewe K."/>
            <person name="Bald T."/>
            <person name="Wingfield B.D."/>
            <person name="Ophir R."/>
            <person name="Freeman S."/>
            <person name="Hippler M."/>
            <person name="Smith K.M."/>
            <person name="Brown D.W."/>
            <person name="Proctor R.H."/>
            <person name="Muensterkoetter M."/>
            <person name="Freitag M."/>
            <person name="Humpf H.-U."/>
            <person name="Gueldener U."/>
            <person name="Tudzynski B."/>
        </authorList>
    </citation>
    <scope>NUCLEOTIDE SEQUENCE [LARGE SCALE GENOMIC DNA]</scope>
    <scope>IDENTIFICATION</scope>
    <scope>FUNCTION</scope>
    <scope>INDUCTION</scope>
    <source>
        <strain>CBS 195.34 / IMI 58289 / NRRL A-6831</strain>
    </source>
</reference>
<reference key="2">
    <citation type="journal article" date="2015" name="J. Nat. Prod.">
        <title>Isolation and structure elucidation of fujikurins A-D: products of the PKS19 gene cluster in Fusarium fujikuroi.</title>
        <authorList>
            <person name="von Bargen K.W."/>
            <person name="Niehaus E.M."/>
            <person name="Krug I."/>
            <person name="Bergander K."/>
            <person name="Wuerthwein E.U."/>
            <person name="Tudzynski B."/>
            <person name="Humpf H.U."/>
        </authorList>
    </citation>
    <scope>FUNCTION</scope>
</reference>
<feature type="chain" id="PRO_0000442008" description="Polyketide synthase 19">
    <location>
        <begin position="1"/>
        <end position="2492"/>
    </location>
</feature>
<feature type="domain" description="Ketosynthase family 3 (KS3)" evidence="3">
    <location>
        <begin position="12"/>
        <end position="463"/>
    </location>
</feature>
<feature type="domain" description="PKS/mFAS DH" evidence="4">
    <location>
        <begin position="967"/>
        <end position="1273"/>
    </location>
</feature>
<feature type="domain" description="Carrier" evidence="2">
    <location>
        <begin position="2404"/>
        <end position="2479"/>
    </location>
</feature>
<feature type="region of interest" description="Malonyl-CoA:ACP transacylase (MAT) domain" evidence="1">
    <location>
        <begin position="571"/>
        <end position="866"/>
    </location>
</feature>
<feature type="region of interest" description="Dehydratase (DH) domain" evidence="1">
    <location>
        <begin position="967"/>
        <end position="1270"/>
    </location>
</feature>
<feature type="region of interest" description="N-terminal hotdog fold" evidence="4">
    <location>
        <begin position="967"/>
        <end position="1110"/>
    </location>
</feature>
<feature type="region of interest" description="C-terminal hotdog fold" evidence="4">
    <location>
        <begin position="1125"/>
        <end position="1273"/>
    </location>
</feature>
<feature type="region of interest" description="C-methyltransferase (CMeT) domain" evidence="1">
    <location>
        <begin position="1431"/>
        <end position="1604"/>
    </location>
</feature>
<feature type="region of interest" description="Ketoreductase (KR) domain" evidence="1">
    <location>
        <begin position="2118"/>
        <end position="2293"/>
    </location>
</feature>
<feature type="active site" description="For beta-ketoacyl synthase activity" evidence="3">
    <location>
        <position position="202"/>
    </location>
</feature>
<feature type="active site" description="For beta-ketoacyl synthase activity" evidence="3">
    <location>
        <position position="341"/>
    </location>
</feature>
<feature type="active site" description="For beta-ketoacyl synthase activity" evidence="3">
    <location>
        <position position="383"/>
    </location>
</feature>
<feature type="active site" description="Proton acceptor; for dehydratase activity" evidence="4">
    <location>
        <position position="1001"/>
    </location>
</feature>
<feature type="active site" description="Proton donor; for dehydratase activity" evidence="4">
    <location>
        <position position="1183"/>
    </location>
</feature>
<feature type="modified residue" description="O-(pantetheine 4'-phosphoryl)serine" evidence="2">
    <location>
        <position position="2438"/>
    </location>
</feature>
<name>FUJ1_GIBF5</name>
<proteinExistence type="evidence at transcript level"/>
<dbReference type="EC" id="2.3.1.-" evidence="6"/>
<dbReference type="EMBL" id="HF679030">
    <property type="protein sequence ID" value="CCT72377.1"/>
    <property type="molecule type" value="Genomic_DNA"/>
</dbReference>
<dbReference type="SMR" id="S0EET5"/>
<dbReference type="STRING" id="1279085.S0EET5"/>
<dbReference type="EnsemblFungi" id="CCT72377">
    <property type="protein sequence ID" value="CCT72377"/>
    <property type="gene ID" value="FFUJ_12239"/>
</dbReference>
<dbReference type="VEuPathDB" id="FungiDB:FFUJ_12239"/>
<dbReference type="HOGENOM" id="CLU_000022_31_0_1"/>
<dbReference type="Proteomes" id="UP000016800">
    <property type="component" value="Chromosome 8"/>
</dbReference>
<dbReference type="GO" id="GO:0004315">
    <property type="term" value="F:3-oxoacyl-[acyl-carrier-protein] synthase activity"/>
    <property type="evidence" value="ECO:0007669"/>
    <property type="project" value="InterPro"/>
</dbReference>
<dbReference type="GO" id="GO:0004312">
    <property type="term" value="F:fatty acid synthase activity"/>
    <property type="evidence" value="ECO:0007669"/>
    <property type="project" value="TreeGrafter"/>
</dbReference>
<dbReference type="GO" id="GO:0008168">
    <property type="term" value="F:methyltransferase activity"/>
    <property type="evidence" value="ECO:0007669"/>
    <property type="project" value="UniProtKB-KW"/>
</dbReference>
<dbReference type="GO" id="GO:0016491">
    <property type="term" value="F:oxidoreductase activity"/>
    <property type="evidence" value="ECO:0007669"/>
    <property type="project" value="UniProtKB-KW"/>
</dbReference>
<dbReference type="GO" id="GO:0031177">
    <property type="term" value="F:phosphopantetheine binding"/>
    <property type="evidence" value="ECO:0007669"/>
    <property type="project" value="InterPro"/>
</dbReference>
<dbReference type="GO" id="GO:0006633">
    <property type="term" value="P:fatty acid biosynthetic process"/>
    <property type="evidence" value="ECO:0007669"/>
    <property type="project" value="InterPro"/>
</dbReference>
<dbReference type="GO" id="GO:0032259">
    <property type="term" value="P:methylation"/>
    <property type="evidence" value="ECO:0007669"/>
    <property type="project" value="UniProtKB-KW"/>
</dbReference>
<dbReference type="GO" id="GO:0030639">
    <property type="term" value="P:polyketide biosynthetic process"/>
    <property type="evidence" value="ECO:0007669"/>
    <property type="project" value="UniProtKB-ARBA"/>
</dbReference>
<dbReference type="CDD" id="cd02440">
    <property type="entry name" value="AdoMet_MTases"/>
    <property type="match status" value="1"/>
</dbReference>
<dbReference type="CDD" id="cd00833">
    <property type="entry name" value="PKS"/>
    <property type="match status" value="1"/>
</dbReference>
<dbReference type="Gene3D" id="3.40.47.10">
    <property type="match status" value="1"/>
</dbReference>
<dbReference type="Gene3D" id="1.10.1200.10">
    <property type="entry name" value="ACP-like"/>
    <property type="match status" value="1"/>
</dbReference>
<dbReference type="Gene3D" id="3.40.366.10">
    <property type="entry name" value="Malonyl-Coenzyme A Acyl Carrier Protein, domain 2"/>
    <property type="match status" value="1"/>
</dbReference>
<dbReference type="Gene3D" id="3.40.50.720">
    <property type="entry name" value="NAD(P)-binding Rossmann-like Domain"/>
    <property type="match status" value="2"/>
</dbReference>
<dbReference type="Gene3D" id="3.10.129.110">
    <property type="entry name" value="Polyketide synthase dehydratase"/>
    <property type="match status" value="1"/>
</dbReference>
<dbReference type="Gene3D" id="3.40.50.150">
    <property type="entry name" value="Vaccinia Virus protein VP39"/>
    <property type="match status" value="1"/>
</dbReference>
<dbReference type="InterPro" id="IPR001227">
    <property type="entry name" value="Ac_transferase_dom_sf"/>
</dbReference>
<dbReference type="InterPro" id="IPR036736">
    <property type="entry name" value="ACP-like_sf"/>
</dbReference>
<dbReference type="InterPro" id="IPR014043">
    <property type="entry name" value="Acyl_transferase_dom"/>
</dbReference>
<dbReference type="InterPro" id="IPR016035">
    <property type="entry name" value="Acyl_Trfase/lysoPLipase"/>
</dbReference>
<dbReference type="InterPro" id="IPR018201">
    <property type="entry name" value="Ketoacyl_synth_AS"/>
</dbReference>
<dbReference type="InterPro" id="IPR014031">
    <property type="entry name" value="Ketoacyl_synth_C"/>
</dbReference>
<dbReference type="InterPro" id="IPR014030">
    <property type="entry name" value="Ketoacyl_synth_N"/>
</dbReference>
<dbReference type="InterPro" id="IPR016036">
    <property type="entry name" value="Malonyl_transacylase_ACP-bd"/>
</dbReference>
<dbReference type="InterPro" id="IPR013217">
    <property type="entry name" value="Methyltransf_12"/>
</dbReference>
<dbReference type="InterPro" id="IPR036291">
    <property type="entry name" value="NAD(P)-bd_dom_sf"/>
</dbReference>
<dbReference type="InterPro" id="IPR056501">
    <property type="entry name" value="NAD-bd_HRPKS_sdrA"/>
</dbReference>
<dbReference type="InterPro" id="IPR032821">
    <property type="entry name" value="PKS_assoc"/>
</dbReference>
<dbReference type="InterPro" id="IPR020841">
    <property type="entry name" value="PKS_Beta-ketoAc_synthase_dom"/>
</dbReference>
<dbReference type="InterPro" id="IPR042104">
    <property type="entry name" value="PKS_dehydratase_sf"/>
</dbReference>
<dbReference type="InterPro" id="IPR020807">
    <property type="entry name" value="PKS_DH"/>
</dbReference>
<dbReference type="InterPro" id="IPR049551">
    <property type="entry name" value="PKS_DH_C"/>
</dbReference>
<dbReference type="InterPro" id="IPR049552">
    <property type="entry name" value="PKS_DH_N"/>
</dbReference>
<dbReference type="InterPro" id="IPR013968">
    <property type="entry name" value="PKS_KR"/>
</dbReference>
<dbReference type="InterPro" id="IPR049900">
    <property type="entry name" value="PKS_mFAS_DH"/>
</dbReference>
<dbReference type="InterPro" id="IPR050091">
    <property type="entry name" value="PKS_NRPS_Biosynth_Enz"/>
</dbReference>
<dbReference type="InterPro" id="IPR020806">
    <property type="entry name" value="PKS_PP-bd"/>
</dbReference>
<dbReference type="InterPro" id="IPR009081">
    <property type="entry name" value="PP-bd_ACP"/>
</dbReference>
<dbReference type="InterPro" id="IPR006162">
    <property type="entry name" value="Ppantetheine_attach_site"/>
</dbReference>
<dbReference type="InterPro" id="IPR029063">
    <property type="entry name" value="SAM-dependent_MTases_sf"/>
</dbReference>
<dbReference type="InterPro" id="IPR016039">
    <property type="entry name" value="Thiolase-like"/>
</dbReference>
<dbReference type="PANTHER" id="PTHR43775">
    <property type="entry name" value="FATTY ACID SYNTHASE"/>
    <property type="match status" value="1"/>
</dbReference>
<dbReference type="PANTHER" id="PTHR43775:SF20">
    <property type="entry name" value="HYBRID PKS-NRPS SYNTHETASE APDA"/>
    <property type="match status" value="1"/>
</dbReference>
<dbReference type="Pfam" id="PF00698">
    <property type="entry name" value="Acyl_transf_1"/>
    <property type="match status" value="1"/>
</dbReference>
<dbReference type="Pfam" id="PF16197">
    <property type="entry name" value="KAsynt_C_assoc"/>
    <property type="match status" value="1"/>
</dbReference>
<dbReference type="Pfam" id="PF00109">
    <property type="entry name" value="ketoacyl-synt"/>
    <property type="match status" value="1"/>
</dbReference>
<dbReference type="Pfam" id="PF02801">
    <property type="entry name" value="Ketoacyl-synt_C"/>
    <property type="match status" value="1"/>
</dbReference>
<dbReference type="Pfam" id="PF08659">
    <property type="entry name" value="KR"/>
    <property type="match status" value="1"/>
</dbReference>
<dbReference type="Pfam" id="PF08242">
    <property type="entry name" value="Methyltransf_12"/>
    <property type="match status" value="1"/>
</dbReference>
<dbReference type="Pfam" id="PF23114">
    <property type="entry name" value="NAD-bd_HRPKS_sdrA"/>
    <property type="match status" value="1"/>
</dbReference>
<dbReference type="Pfam" id="PF21089">
    <property type="entry name" value="PKS_DH_N"/>
    <property type="match status" value="1"/>
</dbReference>
<dbReference type="Pfam" id="PF00550">
    <property type="entry name" value="PP-binding"/>
    <property type="match status" value="1"/>
</dbReference>
<dbReference type="Pfam" id="PF14765">
    <property type="entry name" value="PS-DH"/>
    <property type="match status" value="1"/>
</dbReference>
<dbReference type="SMART" id="SM00827">
    <property type="entry name" value="PKS_AT"/>
    <property type="match status" value="1"/>
</dbReference>
<dbReference type="SMART" id="SM00826">
    <property type="entry name" value="PKS_DH"/>
    <property type="match status" value="1"/>
</dbReference>
<dbReference type="SMART" id="SM00822">
    <property type="entry name" value="PKS_KR"/>
    <property type="match status" value="1"/>
</dbReference>
<dbReference type="SMART" id="SM00825">
    <property type="entry name" value="PKS_KS"/>
    <property type="match status" value="1"/>
</dbReference>
<dbReference type="SMART" id="SM00823">
    <property type="entry name" value="PKS_PP"/>
    <property type="match status" value="1"/>
</dbReference>
<dbReference type="SUPFAM" id="SSF47336">
    <property type="entry name" value="ACP-like"/>
    <property type="match status" value="1"/>
</dbReference>
<dbReference type="SUPFAM" id="SSF52151">
    <property type="entry name" value="FabD/lysophospholipase-like"/>
    <property type="match status" value="1"/>
</dbReference>
<dbReference type="SUPFAM" id="SSF51735">
    <property type="entry name" value="NAD(P)-binding Rossmann-fold domains"/>
    <property type="match status" value="1"/>
</dbReference>
<dbReference type="SUPFAM" id="SSF55048">
    <property type="entry name" value="Probable ACP-binding domain of malonyl-CoA ACP transacylase"/>
    <property type="match status" value="1"/>
</dbReference>
<dbReference type="SUPFAM" id="SSF53335">
    <property type="entry name" value="S-adenosyl-L-methionine-dependent methyltransferases"/>
    <property type="match status" value="1"/>
</dbReference>
<dbReference type="SUPFAM" id="SSF53901">
    <property type="entry name" value="Thiolase-like"/>
    <property type="match status" value="1"/>
</dbReference>
<dbReference type="PROSITE" id="PS00606">
    <property type="entry name" value="KS3_1"/>
    <property type="match status" value="1"/>
</dbReference>
<dbReference type="PROSITE" id="PS52004">
    <property type="entry name" value="KS3_2"/>
    <property type="match status" value="1"/>
</dbReference>
<dbReference type="PROSITE" id="PS00012">
    <property type="entry name" value="PHOSPHOPANTETHEINE"/>
    <property type="match status" value="1"/>
</dbReference>
<dbReference type="PROSITE" id="PS52019">
    <property type="entry name" value="PKS_MFAS_DH"/>
    <property type="match status" value="1"/>
</dbReference>
<protein>
    <recommendedName>
        <fullName evidence="7">Polyketide synthase 19</fullName>
        <shortName evidence="7">PKS19</shortName>
        <ecNumber evidence="6">2.3.1.-</ecNumber>
    </recommendedName>
    <alternativeName>
        <fullName evidence="8">Fujikurins biosynthesis cluster protein PKS19</fullName>
    </alternativeName>
</protein>
<sequence length="2492" mass="272819">MGSQISEKYYAREPIAIVGTSCRFPGGASSPSKLWELLDNPRDVVQKIPPRRFSTEAFYNADSQHHGVSPSDLIKGLRLTLQWSTNVKHAYLLDDDPRGFDRDFFAINPKEAEAMDPQQRILLETVYESVESAGYSIEQLRGSSTAVFVGCMSFDYQFAAIRGIDSTLPQYHATGAAMSILANRVSYFYDWKGPSVAIDTACSSSLVALHQAVSALRSGDAKLAVAAGSNLILGPEPFISESKLNMLSPNGRSYMWDASADGYTRGEGFSVLLLKTLTKALADSDHIECVIRETGVNSDGKTPGITMPSSNAQAQLIRDTYAKCGLDPNRESDRPQFFEAHGTGTQAGDPIEARAIQEVFFPDHTQPTDSKLLVGSVKTVIGHTEGTAGLAGVLKATLAIQHSQIPANLHFNELNPKIRPYYDNLRIPTETTPWPTLSPGAPRRVSVNSFGFGGTNAHAIVESWDGPYVRERSPAPNAIGAGPFVLSANSSQALAANAGALAEYLKEHPTTNLGQLGYTLFKRTNLPFRAAFSGSSVECLVEKLQAGKESLKSNSRITTLPESLPPRVLGVFTGQGAQWAKMGEGLYQTSMVFRNSVEQMQHSLDSLPESDRPNWTLAEQLHAPKETSRVGQATVSQPLCTAIQVALVDVLHVVGVELSAVVGHSSGEIGAAYAAGYLSAGDAIRIAYYRGFHSHLAQGPGGKRGSMMAVGLSYDQALSFCNELSGGITVAASNSYTSCTLAGDAEVIEEAKSRLEENGTFARVLAVDTAYHSHHMKPCATPYLESLKQCDIQVQKPKKGCAWYSSVWGSDGSSRSFNTEGELLQGQYWIENLTHPVLFSQALARALNEDQCFDCALEVGPHPALKGPSLEIIKTLTGVSLPYSGVLKRGEGAAEAFADALGLLWKSFPSSRPTITFNGICRAFSAVKPSSMTILKNLPNYSWDHATLFWKESRASRNFRTPKHAPHELLGRSVSHGEHSRREVHWRQVMRLRELPWLRGHKIQGEILFPASGYLSMAYEAAIRLVDEQQSVRIVEMQDMDIVRAMRLEDDTSGLEVLFTIHVTSQSQSCINANVACYSGAVDAPQPLDAHQTELTAHFNGRIRLWLEQPSAYTLPLRSEPLLPMSELNMAQVYSSLSKEGFDYSGDFQAKSMLRRLGHTVVTLSSPSPVSWTHTLTHPAPIDTAVQGLLTAFSFPGDGRIGTTYLPTRIESVRISTAPSESDAPILKADSVVTLTDVTTITGDVDIFDAASCHTQVQMRGVQMTAIGKPPDRWLYAGKIWARDIAYGLEPGSGTQFSDDDRLLYEQLVRTAYFYLRQLRSKIRPPELMLMGKFRRHMMRWVTEHLFPQIESGQHPDIRTEWKDDTLDTVQRWRNSRPADNNDMNLLHAMGQSLIPIVRGTVPPLKVLVQDGMLDRLYFEGIGFRDGNVDLGAIVKQLGHEHPRMRIVEVGAGTGGTTRTVLDALETRYAAYTYTDISTGFFENARSVFSQHASKLTFKTLNIENDPVDQGFTEGSFDMLIASNCLHATHSLENTLRQCRKLLRPGGRLVLLEITRDFLPIQMIMATLPGWFLGMDEGRLWAPTVTLDRWDEILKTTGFSGVDISSTPSYCSVIVSQAVDETVSVLRNPLASPDGVPSLSEIVIIGGVGSGLAPQIQSLLTSTIPVETRIASSLEDVEVNRGSTVLCLGDLDSPSFCNMDQTRFEGLQKVFQAANAVLWVTSGATSGTNPEANITVGMGSTLMAERGDLKLQFLDVDDPTTIDPSMLARMLLRLAILDQSKSDETLWTIEPELTLKNGALYIPRVQPLDVINRQSTARYRQVIEDIDLNSASPVVDLVKYQDSWKLQSSPIDSTRVNGIEVRVTASSLHTLSCEGGKPEYIFMGRELLSGDNIIGLSASNSSIANITDDQVLHRWQDSQTGAINVAQLSDLLAKALAENLLRNTTGPVWIHGAPSNLSEAIGEVTKEEGLDVFQTTSDLAQVAAFNFIHPYATRQDIQDKQPSGLRNFVDLEHSELRNEALHTSVAASLPVSAISHRCMMDLTHGINRSYLAKLAARCLTEDRKSSEDHSQVILIDRIASESSKDLGPTTVIDWHAANTVTALVRPLEHRDLFFPSKSYLLFGMTGDLGISVCKWMVDNGARNVVLASRNPNVPSSVLNFMSRKSATVRALSVDITDMESLCTAREDIESTMPPIGGVMNAAMVLRDRLFHDLTWEDFAAVLGPKVQGTQNINNAFGQKESALDFFVCFSSATSIIGTVGQSAYAAANHFMVSLVQQRKRRGLAGSIVHISVLTGLGYIFRRGSEHTAVIDKALLPRLERQAETDLHEMLAEAIVCGRPGSSQPPELITGIKAVFQGEWRDDPRLLGYLGQQQLGNDSAKDQAAGMVSVETQLDAADDPAECLPILEKRFAQALGNMLEIDPEKVDGSMPVASLGIDSLVAIRIREWFMKELGVEVPVLKIMSVGHSLSRVCDDVLVDWRRVKKEGELEDKK</sequence>
<organism>
    <name type="scientific">Gibberella fujikuroi (strain CBS 195.34 / IMI 58289 / NRRL A-6831)</name>
    <name type="common">Bakanae and foot rot disease fungus</name>
    <name type="synonym">Fusarium fujikuroi</name>
    <dbReference type="NCBI Taxonomy" id="1279085"/>
    <lineage>
        <taxon>Eukaryota</taxon>
        <taxon>Fungi</taxon>
        <taxon>Dikarya</taxon>
        <taxon>Ascomycota</taxon>
        <taxon>Pezizomycotina</taxon>
        <taxon>Sordariomycetes</taxon>
        <taxon>Hypocreomycetidae</taxon>
        <taxon>Hypocreales</taxon>
        <taxon>Nectriaceae</taxon>
        <taxon>Fusarium</taxon>
        <taxon>Fusarium fujikuroi species complex</taxon>
    </lineage>
</organism>
<accession>S0EET5</accession>
<comment type="function">
    <text evidence="5 6">Highly reducing polyketide synthase; part of the gene cluster that mediates the biosynthesis of fujikurins A-D, secondary metabolites playing a role during rice infection (PubMed:23825955, PubMed:26192387). The polyketide synthase PKS19 acts with the trans-enoyl reductase FFUJ_12240 and the polyketide transferase FFUJ_12241 to produce fujikurins, however, the biosynthesis pathway has not been identified yet (PubMed:23825955, PubMed:26192387).</text>
</comment>
<comment type="induction">
    <text evidence="5">The fujikurins gene cluster is specifically expressed during rice infection (PubMed:23825955).</text>
</comment>